<gene>
    <name type="primary">FPGS</name>
</gene>
<organism>
    <name type="scientific">Homo sapiens</name>
    <name type="common">Human</name>
    <dbReference type="NCBI Taxonomy" id="9606"/>
    <lineage>
        <taxon>Eukaryota</taxon>
        <taxon>Metazoa</taxon>
        <taxon>Chordata</taxon>
        <taxon>Craniata</taxon>
        <taxon>Vertebrata</taxon>
        <taxon>Euteleostomi</taxon>
        <taxon>Mammalia</taxon>
        <taxon>Eutheria</taxon>
        <taxon>Euarchontoglires</taxon>
        <taxon>Primates</taxon>
        <taxon>Haplorrhini</taxon>
        <taxon>Catarrhini</taxon>
        <taxon>Hominidae</taxon>
        <taxon>Homo</taxon>
    </lineage>
</organism>
<accession>Q05932</accession>
<accession>B3KPW4</accession>
<accession>B7Z2Z3</accession>
<accession>F5H0K6</accession>
<accession>Q5JU19</accession>
<accession>Q5JU22</accession>
<accession>Q6P2P6</accession>
<feature type="transit peptide" description="Mitochondrion" evidence="16">
    <location>
        <begin position="1"/>
        <end position="42"/>
    </location>
</feature>
<feature type="chain" id="PRO_0000010097" description="Folylpolyglutamate synthase, mitochondrial">
    <location>
        <begin position="43"/>
        <end position="587"/>
    </location>
</feature>
<feature type="binding site" evidence="1">
    <location>
        <begin position="106"/>
        <end position="109"/>
    </location>
    <ligand>
        <name>ATP</name>
        <dbReference type="ChEBI" id="CHEBI:30616"/>
    </ligand>
</feature>
<feature type="binding site" evidence="1">
    <location>
        <position position="130"/>
    </location>
    <ligand>
        <name>Mg(2+)</name>
        <dbReference type="ChEBI" id="CHEBI:18420"/>
        <label>1</label>
    </ligand>
</feature>
<feature type="binding site" evidence="1">
    <location>
        <position position="200"/>
    </location>
    <ligand>
        <name>Mg(2+)</name>
        <dbReference type="ChEBI" id="CHEBI:18420"/>
        <label>1</label>
    </ligand>
</feature>
<feature type="binding site" evidence="1">
    <location>
        <position position="228"/>
    </location>
    <ligand>
        <name>Mg(2+)</name>
        <dbReference type="ChEBI" id="CHEBI:18420"/>
        <label>2</label>
    </ligand>
</feature>
<feature type="binding site" evidence="1">
    <location>
        <position position="363"/>
    </location>
    <ligand>
        <name>ATP</name>
        <dbReference type="ChEBI" id="CHEBI:30616"/>
    </ligand>
</feature>
<feature type="binding site" evidence="1">
    <location>
        <position position="377"/>
    </location>
    <ligand>
        <name>ATP</name>
        <dbReference type="ChEBI" id="CHEBI:30616"/>
    </ligand>
</feature>
<feature type="modified residue" description="N-acetylmethionine" evidence="16">
    <location>
        <position position="43"/>
    </location>
</feature>
<feature type="modified residue" description="Phosphoserine" evidence="17">
    <location>
        <position position="539"/>
    </location>
</feature>
<feature type="splice variant" id="VSP_018733" description="In isoform 2 and isoform 3." evidence="14">
    <location>
        <begin position="1"/>
        <end position="42"/>
    </location>
</feature>
<feature type="splice variant" id="VSP_041959" description="In isoform 3." evidence="14">
    <location>
        <begin position="43"/>
        <end position="50"/>
    </location>
</feature>
<feature type="splice variant" id="VSP_041960" description="In isoform 4." evidence="14">
    <location>
        <begin position="168"/>
        <end position="193"/>
    </location>
</feature>
<feature type="sequence variant" id="VAR_066016" description="In dbSNP:rs1034635821 and dbSNP:rs759336102." evidence="6">
    <original>F</original>
    <variation>L</variation>
    <location>
        <position position="13"/>
    </location>
</feature>
<feature type="sequence variant" id="VAR_059305" description="In dbSNP:rs10760502." evidence="3 4 8">
    <original>I</original>
    <variation>V</variation>
    <location>
        <position position="22"/>
    </location>
</feature>
<feature type="sequence variant" id="VAR_043929" description="In dbSNP:rs12686275.">
    <original>V</original>
    <variation>D</variation>
    <location>
        <position position="437"/>
    </location>
</feature>
<feature type="sequence variant" id="VAR_066017" description="Expression is reduced by 1.86-fold; Vmax with methotrexate as substrate is significantly reduced resulting in significantly decreased intrinsic clearance of methotrexate; Km of glutamic acid is increased 3.5-fold and apparent Vmax of it is reduced 3.4-fold; reaction velocity at 100 nmol/L of pemetrexed is significantly reduced and folic acid dose-response curve is shifted to the right which corresponds to 4.32-fold increase in the EC(50) for folic acid; IC(50) of methotrexate is 1.84-fold higher and accumulation of a lower ratio of long-chain methotrexate polyglutamates to short-chain polyglutamates is detected; all results are for isoform 2 variant in comparison to the wild-type of it; dbSNP:rs35789560." evidence="6">
    <original>R</original>
    <variation>C</variation>
    <location>
        <position position="466"/>
    </location>
</feature>
<feature type="sequence variant" id="VAR_043930" description="In dbSNP:rs17855900." evidence="4 6">
    <original>A</original>
    <variation>V</variation>
    <location>
        <position position="489"/>
    </location>
</feature>
<feature type="sequence variant" id="VAR_066018" description="Expression reduced by 2.11-fold; Vmax with methotrexate as substrate is significantly reduced resulting in significantly decreased intrinsic clearance of methotrexate; apparent Vmax for glutamic acid is reduced 5-fold; reaction velocity at 100 nmol/L of pemetrexed is significantly reduced and folic acid dose-response curve is shifted to the right which corresponds to 4.28-fold increase in the EC(50) for folic acid; IC(50) of methotrexate is 1.64-fold higher and accumulation of a lower ratio of long-chain methotrexate polyglutamates to short-chain polyglutamates is detected; all results are for isoform 2 variant in comparison to the wild-type of it; dbSNP:rs200314440." evidence="6">
    <original>S</original>
    <variation>F</variation>
    <location>
        <position position="499"/>
    </location>
</feature>
<feature type="sequence variant" id="VAR_043931" description="In dbSNP:rs34354111.">
    <original>S</original>
    <variation>T</variation>
    <location>
        <position position="528"/>
    </location>
</feature>
<feature type="sequence conflict" description="In Ref. 1; BAG51826." evidence="15" ref="1">
    <original>V</original>
    <variation>A</variation>
    <location>
        <position position="101"/>
    </location>
</feature>
<sequence length="587" mass="64609">MSRARSHLRAALFLAAASARGITTQVAARRGLSAWPVPQEPSMEYQDAVRMLNTLQTNAGYLEQVKRQRGDPQTQLEAMELYLARSGLQVEDLDRLNIIHVTGTKGKGSTCAFTECILRSYGLKTGFFSSPHLVQVRERIRINGQPISPELFTKYFWRLYHRLEETKDGSCVSMPPYFRFLTLMAFHVFLQEKVDLAVVEVGIGGAYDCTNIIRKPVVCGVSSLGIDHTSLLGDTVEKIAWQKGGIFKQGVPAFTVLQPEGPLAVLRDRAQQISCPLYLCPMLEALEEGGPPLTLGLEGEHQRSNAALALQLAHCWLQRQDRHGAGEPKASRPGLLWQLPLAPVFQPTSHMRLGLRNTEWPGRTQVLRRGPLTWYLDGAHTASSAQACVRWFRQALQGRERPSGGPEVRVLLFNATGDRDPAALLKLLQPCQFDYAVFCPNLTEVSSTGNADQQNFTVTLDQVLLRCLEHQQHWNHLDEEQASPDLWSAPSPEPGGSASLLLAPHPPHTCSASSLVFSCISHALQWISQGRDPIFQPPSPPKGLLTHPVAHSGASILREAAAIHVLVTGSLHLVGGVLKLLEPALSQ</sequence>
<proteinExistence type="evidence at protein level"/>
<name>FOLC_HUMAN</name>
<evidence type="ECO:0000250" key="1">
    <source>
        <dbReference type="UniProtKB" id="P08192"/>
    </source>
</evidence>
<evidence type="ECO:0000269" key="2">
    <source>
    </source>
</evidence>
<evidence type="ECO:0000269" key="3">
    <source>
    </source>
</evidence>
<evidence type="ECO:0000269" key="4">
    <source>
    </source>
</evidence>
<evidence type="ECO:0000269" key="5">
    <source>
    </source>
</evidence>
<evidence type="ECO:0000269" key="6">
    <source>
    </source>
</evidence>
<evidence type="ECO:0000269" key="7">
    <source>
    </source>
</evidence>
<evidence type="ECO:0000269" key="8">
    <source>
    </source>
</evidence>
<evidence type="ECO:0000269" key="9">
    <source>
    </source>
</evidence>
<evidence type="ECO:0000269" key="10">
    <source>
    </source>
</evidence>
<evidence type="ECO:0000269" key="11">
    <source>
    </source>
</evidence>
<evidence type="ECO:0000269" key="12">
    <source>
    </source>
</evidence>
<evidence type="ECO:0000269" key="13">
    <source>
    </source>
</evidence>
<evidence type="ECO:0000303" key="14">
    <source>
    </source>
</evidence>
<evidence type="ECO:0000305" key="15"/>
<evidence type="ECO:0007744" key="16">
    <source>
    </source>
</evidence>
<evidence type="ECO:0007744" key="17">
    <source>
    </source>
</evidence>
<comment type="function">
    <text evidence="9 10 12 13">Catalyzes conversion of folates to polyglutamate derivatives allowing concentration of folate compounds in the cell and the intracellular retention of these cofactors, which are important substrates for most of the folate-dependent enzymes that are involved in one-carbon transfer reactions involved in purine, pyrimidine and amino acid synthesis. Unsubstituted reduced folates are the preferred substrates. Metabolizes methotrexate (MTX) to polyglutamates.</text>
</comment>
<comment type="catalytic activity">
    <reaction evidence="2 6 7 9 11 13">
        <text>(6S)-5,6,7,8-tetrahydrofolyl-(gamma-L-Glu)(n) + L-glutamate + ATP = (6S)-5,6,7,8-tetrahydrofolyl-(gamma-L-Glu)(n+1) + ADP + phosphate + H(+)</text>
        <dbReference type="Rhea" id="RHEA:10580"/>
        <dbReference type="Rhea" id="RHEA-COMP:14738"/>
        <dbReference type="Rhea" id="RHEA-COMP:14740"/>
        <dbReference type="ChEBI" id="CHEBI:15378"/>
        <dbReference type="ChEBI" id="CHEBI:29985"/>
        <dbReference type="ChEBI" id="CHEBI:30616"/>
        <dbReference type="ChEBI" id="CHEBI:43474"/>
        <dbReference type="ChEBI" id="CHEBI:141005"/>
        <dbReference type="ChEBI" id="CHEBI:456216"/>
        <dbReference type="EC" id="6.3.2.17"/>
    </reaction>
</comment>
<comment type="cofactor">
    <cofactor evidence="13">
        <name>K(+)</name>
        <dbReference type="ChEBI" id="CHEBI:29103"/>
    </cofactor>
    <cofactor evidence="13">
        <name>NH4(+)</name>
        <dbReference type="ChEBI" id="CHEBI:28938"/>
    </cofactor>
    <text evidence="13">A monovalent cation. K(+) is most effective, followed by NH4(+) and Rb(+). Na(+), Li(+) and Cs(+) are ineffective.</text>
</comment>
<comment type="activity regulation">
    <text evidence="13">Activated by 10 mM sodium bicarbonate.</text>
</comment>
<comment type="biophysicochemical properties">
    <kinetics>
        <KM evidence="6 13">201 uM for L-glutamate (isoform 2 at 37 degrees Celsius in the presence of 1 mM ATP and 2 mM L-glutamate)</KM>
        <KM evidence="6 13">200 uM for MgATP (isoform 2 at 37 degrees Celsius in the presence of 1 mM ATP and 2 mM L-glutamate)</KM>
        <KM evidence="6 13">59 uM for pteroylglutamic acid (PteGlu) (isoform 2 at 37 degrees Celsius in the presence of 1 mM ATP and 2 mM L-glutamate)</KM>
        <KM evidence="6 13">16 uM for PteGlu(2) (isoform 2 at 37 degrees Celsius in the presence of 1 mM ATP and 2 mM L-glutamate)</KM>
        <KM evidence="6 13">20 uM for PteGlu(3) (isoform 2 at 37 degrees Celsius in the presence of 1 mM ATP and 2 mM L-glutamate)</KM>
        <KM evidence="6 13">12 uM for PteGlu(4) (isoform 2 at 37 degrees Celsius in the presence of 1 mM ATP and 2 mM L-glutamate)</KM>
        <KM evidence="6 13">64 uM for PteGlu(5) (isoform 2 at 37 degrees Celsius in the presence of 1 mM ATP and 2 mM L-glutamate)</KM>
        <KM evidence="6 13">0.81 uM for H(2)PteGlu (isoform 2 at 37 degrees Celsius in the presence of 1 mM ATP and 2 mM L-glutamate)</KM>
        <KM evidence="6 13">47 uM for H(2)PteGlu(2) (isoform 2 at 37 degrees Celsius in the presence of 1 mM ATP and 2 mM L-glutamate)</KM>
        <KM evidence="6 13">1.6 uM for (6ambo)-tetrahydropteroylpoly-gamma-glutamate (H(4)PteGlu) (isoform 2 at 37 degrees Celsius in the presence of 1 mM ATP and 2 mM L-glutamate)</KM>
        <KM evidence="6 13">4.4 uM for (6S)-H(4)PteGlu (isoform 2 at 37 degrees Celsius in the presence of 1 mM ATP and 2 mM L-glutamate)</KM>
        <KM evidence="6 13">3.3 uM for (6S)-H(4)PteGlu(2) (isoform 2 at 37 degrees Celsius in the presence of 1 mM ATP and 2 mM L-glutamate)</KM>
        <KM evidence="6 13">1.4 uM for (6S)-H(4)PteGlu(3) (isoform 2 at 37 degrees Celsius in the presence of 1 mM ATP and 2 mM L-glutamate)</KM>
        <KM evidence="6 13">1.6 uM for (6S)-H(4)PteGlu(4) (isoform 2 at 37 degrees Celsius in the presence of 1 mM ATP and 2 mM L-glutamate)</KM>
        <KM evidence="6 13">1.4 uM for (6S)-H(4)PteGlu(5) (isoform 2 at 37 degrees Celsius in the presence of 1 mM ATP and 2 mM L-glutamate)</KM>
        <KM evidence="6 13">3.7 uM for (6R)-10-formyl-H(4)PteGlu (isoform 2 at 37 degrees Celsius in the presence of 1 mM ATP and 2 mM L-glutamate)</KM>
        <KM evidence="6 13">2.7 uM for (6R)-10-formyl-H(4)PteGlu(2) (isoform 2 at 37 degrees Celsius in the presence of 1 mM ATP and 2 mM L-glutamate)</KM>
        <KM evidence="6 13">105 uM for (6S)-5-formyl-H(4)PteGlu (isoform 2 at 37 degrees Celsius in the presence of 1 mM ATP and 2 mM L-glutamate)</KM>
        <KM evidence="6 13">13 uM for (6S)-5-formyl-H(4)PteGlu(2) (isoform 2 at 37 degrees Celsius in the presence of 1 mM ATP and 2 mM L-glutamate)</KM>
        <KM evidence="6 13">48 uM for (6S)-5-methyl-H(4)PteGlu (isoform 2 at 37 degrees Celsius in the presence of 1 mM ATP and 2 mM L-glutamate)</KM>
        <KM evidence="6 13">4.4 uM for aminopterin (isoform 2 at 37 degrees Celsius in the presence of 1 mM ATP and 2 mM L-glutamate)</KM>
        <KM evidence="6">55.5 uM for methotrexate (isoform 2, at 37 degrees Celsius in the presence of 10 mM ATP and pH 8.5)</KM>
        <KM evidence="6">52.6 uM for methotrexate (isoform 1, at 37 degrees Celsius in the presence of 10 mM ATP and pH 8.5)</KM>
        <KM evidence="13">71 uM for methotrexate (Glu-1) (isoform 2, at 37 degrees Celsius in the presence of 1 mM ATP and 2 mM L-glutamate)</KM>
        <KM evidence="13">50 uM for methotrexate (Glu-2) (isoform 2, at 37 degrees Celsius in the presence of 1 mM ATP and 2 mM L-glutamate)</KM>
        <KM evidence="13">148 uM for methotrexate (Glu-3) (isoform 2, at 37 degrees Celsius in the presence of 1 mM ATP and 2 mM L-glutamate)</KM>
        <KM evidence="13">5.3 uM for 5-deazaacyclotetrahydrofolate (isoform 2, at 37 degrees Celsius in the presence of 1 mM ATP and 2 mM L-glutamate)</KM>
        <KM evidence="13">2.8 uM for 2-methyl-5,8-dideazaisofolate (isoform 2, at 37 degrees Celsius in the presence of 1 mM ATP and 2 mM L-glutamate)</KM>
        <KM evidence="6">1702 uM for glutamic acid (isoform 2, at 37 degrees Celsius in the presence of 10 mM ATP and pH 8.5)</KM>
        <KM evidence="6">2068 uM for glutamic acid (isoform 1, at 37 degrees Celsius in the presence of 10 mM ATP and pH 8.5)</KM>
        <Vmax evidence="6">0.34 umol/h/mg enzyme with methotrexate as substrate (isoform 2, at 37 degrees Celsius in the presence of 10 mM ATP and pH 8.5)</Vmax>
        <Vmax evidence="6">0.05 umol/h/mg enzyme with methotrexate as substrate (isoform 1, at 37 degrees Celsius in the presence of 10 mM ATP and pH 8.5)</Vmax>
        <Vmax evidence="6">1.26 umol/h/mg enzyme with glutamic acid as substrate (isoform 2, at 37 degrees Celsius in the presence of 10 mM ATP and pH 8.5)</Vmax>
        <Vmax evidence="6">0.25 umol/h/mg enzyme with glutamic acid as substrate (isoform 1, at 37 degrees Celsius in the presence of 10 mM ATP and pH 8.5)</Vmax>
    </kinetics>
    <phDependence>
        <text evidence="6 13">Optimum pH is 9.6 (isoform 2).</text>
    </phDependence>
</comment>
<comment type="pathway">
    <text>Cofactor biosynthesis; tetrahydrofolylpolyglutamate biosynthesis.</text>
</comment>
<comment type="subunit">
    <text>Monomer.</text>
</comment>
<comment type="subcellular location">
    <molecule>Isoform 1</molecule>
    <subcellularLocation>
        <location evidence="5">Mitochondrion inner membrane</location>
    </subcellularLocation>
    <subcellularLocation>
        <location evidence="5 11 13">Mitochondrion matrix</location>
    </subcellularLocation>
</comment>
<comment type="subcellular location">
    <molecule>Isoform 2</molecule>
    <subcellularLocation>
        <location evidence="13">Cytoplasm</location>
    </subcellularLocation>
</comment>
<comment type="alternative products">
    <event type="alternative splicing"/>
    <event type="alternative initiation"/>
    <isoform>
        <id>Q05932-1</id>
        <name>1</name>
        <name>Mitochondrial</name>
        <sequence type="displayed"/>
    </isoform>
    <isoform>
        <id>Q05932-2</id>
        <name>2</name>
        <name>Cytoplasmic</name>
        <sequence type="described" ref="VSP_018733"/>
    </isoform>
    <isoform>
        <id>Q05932-3</id>
        <name>3</name>
        <sequence type="described" ref="VSP_018733 VSP_041959"/>
    </isoform>
    <isoform>
        <id>Q05932-4</id>
        <name>4</name>
        <sequence type="described" ref="VSP_041960"/>
    </isoform>
</comment>
<comment type="miscellaneous">
    <molecule>Isoform 2</molecule>
    <text evidence="15">Produced by alternative initiation at Met-43 of isoform 1.</text>
</comment>
<comment type="miscellaneous">
    <molecule>Isoform 3</molecule>
    <text evidence="15">Produced by alternative splicing of isoform 1.</text>
</comment>
<comment type="miscellaneous">
    <molecule>Isoform 4</molecule>
    <text evidence="15">Produced by alternative splicing of isoform 1.</text>
</comment>
<comment type="similarity">
    <text evidence="15">Belongs to the folylpolyglutamate synthase family.</text>
</comment>
<comment type="sequence caution" evidence="15">
    <conflict type="erroneous initiation">
        <sequence resource="EMBL-CDS" id="AAA35852"/>
    </conflict>
    <text>Truncated N-terminus.</text>
</comment>
<protein>
    <recommendedName>
        <fullName>Folylpolyglutamate synthase, mitochondrial</fullName>
        <ecNumber>6.3.2.17</ecNumber>
    </recommendedName>
    <alternativeName>
        <fullName>Folylpoly-gamma-glutamate synthetase</fullName>
        <shortName>FPGS</shortName>
    </alternativeName>
    <alternativeName>
        <fullName>Tetrahydrofolylpolyglutamate synthase</fullName>
        <shortName>Tetrahydrofolate synthase</shortName>
    </alternativeName>
</protein>
<keyword id="KW-0007">Acetylation</keyword>
<keyword id="KW-0024">Alternative initiation</keyword>
<keyword id="KW-0025">Alternative splicing</keyword>
<keyword id="KW-0067">ATP-binding</keyword>
<keyword id="KW-0963">Cytoplasm</keyword>
<keyword id="KW-0436">Ligase</keyword>
<keyword id="KW-0460">Magnesium</keyword>
<keyword id="KW-0472">Membrane</keyword>
<keyword id="KW-0479">Metal-binding</keyword>
<keyword id="KW-0496">Mitochondrion</keyword>
<keyword id="KW-0999">Mitochondrion inner membrane</keyword>
<keyword id="KW-0547">Nucleotide-binding</keyword>
<keyword id="KW-0554">One-carbon metabolism</keyword>
<keyword id="KW-0597">Phosphoprotein</keyword>
<keyword id="KW-1267">Proteomics identification</keyword>
<keyword id="KW-1185">Reference proteome</keyword>
<keyword id="KW-0809">Transit peptide</keyword>
<reference key="1">
    <citation type="journal article" date="2004" name="Nat. Genet.">
        <title>Complete sequencing and characterization of 21,243 full-length human cDNAs.</title>
        <authorList>
            <person name="Ota T."/>
            <person name="Suzuki Y."/>
            <person name="Nishikawa T."/>
            <person name="Otsuki T."/>
            <person name="Sugiyama T."/>
            <person name="Irie R."/>
            <person name="Wakamatsu A."/>
            <person name="Hayashi K."/>
            <person name="Sato H."/>
            <person name="Nagai K."/>
            <person name="Kimura K."/>
            <person name="Makita H."/>
            <person name="Sekine M."/>
            <person name="Obayashi M."/>
            <person name="Nishi T."/>
            <person name="Shibahara T."/>
            <person name="Tanaka T."/>
            <person name="Ishii S."/>
            <person name="Yamamoto J."/>
            <person name="Saito K."/>
            <person name="Kawai Y."/>
            <person name="Isono Y."/>
            <person name="Nakamura Y."/>
            <person name="Nagahari K."/>
            <person name="Murakami K."/>
            <person name="Yasuda T."/>
            <person name="Iwayanagi T."/>
            <person name="Wagatsuma M."/>
            <person name="Shiratori A."/>
            <person name="Sudo H."/>
            <person name="Hosoiri T."/>
            <person name="Kaku Y."/>
            <person name="Kodaira H."/>
            <person name="Kondo H."/>
            <person name="Sugawara M."/>
            <person name="Takahashi M."/>
            <person name="Kanda K."/>
            <person name="Yokoi T."/>
            <person name="Furuya T."/>
            <person name="Kikkawa E."/>
            <person name="Omura Y."/>
            <person name="Abe K."/>
            <person name="Kamihara K."/>
            <person name="Katsuta N."/>
            <person name="Sato K."/>
            <person name="Tanikawa M."/>
            <person name="Yamazaki M."/>
            <person name="Ninomiya K."/>
            <person name="Ishibashi T."/>
            <person name="Yamashita H."/>
            <person name="Murakawa K."/>
            <person name="Fujimori K."/>
            <person name="Tanai H."/>
            <person name="Kimata M."/>
            <person name="Watanabe M."/>
            <person name="Hiraoka S."/>
            <person name="Chiba Y."/>
            <person name="Ishida S."/>
            <person name="Ono Y."/>
            <person name="Takiguchi S."/>
            <person name="Watanabe S."/>
            <person name="Yosida M."/>
            <person name="Hotuta T."/>
            <person name="Kusano J."/>
            <person name="Kanehori K."/>
            <person name="Takahashi-Fujii A."/>
            <person name="Hara H."/>
            <person name="Tanase T.-O."/>
            <person name="Nomura Y."/>
            <person name="Togiya S."/>
            <person name="Komai F."/>
            <person name="Hara R."/>
            <person name="Takeuchi K."/>
            <person name="Arita M."/>
            <person name="Imose N."/>
            <person name="Musashino K."/>
            <person name="Yuuki H."/>
            <person name="Oshima A."/>
            <person name="Sasaki N."/>
            <person name="Aotsuka S."/>
            <person name="Yoshikawa Y."/>
            <person name="Matsunawa H."/>
            <person name="Ichihara T."/>
            <person name="Shiohata N."/>
            <person name="Sano S."/>
            <person name="Moriya S."/>
            <person name="Momiyama H."/>
            <person name="Satoh N."/>
            <person name="Takami S."/>
            <person name="Terashima Y."/>
            <person name="Suzuki O."/>
            <person name="Nakagawa S."/>
            <person name="Senoh A."/>
            <person name="Mizoguchi H."/>
            <person name="Goto Y."/>
            <person name="Shimizu F."/>
            <person name="Wakebe H."/>
            <person name="Hishigaki H."/>
            <person name="Watanabe T."/>
            <person name="Sugiyama A."/>
            <person name="Takemoto M."/>
            <person name="Kawakami B."/>
            <person name="Yamazaki M."/>
            <person name="Watanabe K."/>
            <person name="Kumagai A."/>
            <person name="Itakura S."/>
            <person name="Fukuzumi Y."/>
            <person name="Fujimori Y."/>
            <person name="Komiyama M."/>
            <person name="Tashiro H."/>
            <person name="Tanigami A."/>
            <person name="Fujiwara T."/>
            <person name="Ono T."/>
            <person name="Yamada K."/>
            <person name="Fujii Y."/>
            <person name="Ozaki K."/>
            <person name="Hirao M."/>
            <person name="Ohmori Y."/>
            <person name="Kawabata A."/>
            <person name="Hikiji T."/>
            <person name="Kobatake N."/>
            <person name="Inagaki H."/>
            <person name="Ikema Y."/>
            <person name="Okamoto S."/>
            <person name="Okitani R."/>
            <person name="Kawakami T."/>
            <person name="Noguchi S."/>
            <person name="Itoh T."/>
            <person name="Shigeta K."/>
            <person name="Senba T."/>
            <person name="Matsumura K."/>
            <person name="Nakajima Y."/>
            <person name="Mizuno T."/>
            <person name="Morinaga M."/>
            <person name="Sasaki M."/>
            <person name="Togashi T."/>
            <person name="Oyama M."/>
            <person name="Hata H."/>
            <person name="Watanabe M."/>
            <person name="Komatsu T."/>
            <person name="Mizushima-Sugano J."/>
            <person name="Satoh T."/>
            <person name="Shirai Y."/>
            <person name="Takahashi Y."/>
            <person name="Nakagawa K."/>
            <person name="Okumura K."/>
            <person name="Nagase T."/>
            <person name="Nomura N."/>
            <person name="Kikuchi H."/>
            <person name="Masuho Y."/>
            <person name="Yamashita R."/>
            <person name="Nakai K."/>
            <person name="Yada T."/>
            <person name="Nakamura Y."/>
            <person name="Ohara O."/>
            <person name="Isogai T."/>
            <person name="Sugano S."/>
        </authorList>
    </citation>
    <scope>NUCLEOTIDE SEQUENCE [LARGE SCALE MRNA] (ISOFORMS 3 AND 4)</scope>
    <scope>VARIANT VAL-22</scope>
</reference>
<reference key="2">
    <citation type="journal article" date="2004" name="Nature">
        <title>DNA sequence and analysis of human chromosome 9.</title>
        <authorList>
            <person name="Humphray S.J."/>
            <person name="Oliver K."/>
            <person name="Hunt A.R."/>
            <person name="Plumb R.W."/>
            <person name="Loveland J.E."/>
            <person name="Howe K.L."/>
            <person name="Andrews T.D."/>
            <person name="Searle S."/>
            <person name="Hunt S.E."/>
            <person name="Scott C.E."/>
            <person name="Jones M.C."/>
            <person name="Ainscough R."/>
            <person name="Almeida J.P."/>
            <person name="Ambrose K.D."/>
            <person name="Ashwell R.I.S."/>
            <person name="Babbage A.K."/>
            <person name="Babbage S."/>
            <person name="Bagguley C.L."/>
            <person name="Bailey J."/>
            <person name="Banerjee R."/>
            <person name="Barker D.J."/>
            <person name="Barlow K.F."/>
            <person name="Bates K."/>
            <person name="Beasley H."/>
            <person name="Beasley O."/>
            <person name="Bird C.P."/>
            <person name="Bray-Allen S."/>
            <person name="Brown A.J."/>
            <person name="Brown J.Y."/>
            <person name="Burford D."/>
            <person name="Burrill W."/>
            <person name="Burton J."/>
            <person name="Carder C."/>
            <person name="Carter N.P."/>
            <person name="Chapman J.C."/>
            <person name="Chen Y."/>
            <person name="Clarke G."/>
            <person name="Clark S.Y."/>
            <person name="Clee C.M."/>
            <person name="Clegg S."/>
            <person name="Collier R.E."/>
            <person name="Corby N."/>
            <person name="Crosier M."/>
            <person name="Cummings A.T."/>
            <person name="Davies J."/>
            <person name="Dhami P."/>
            <person name="Dunn M."/>
            <person name="Dutta I."/>
            <person name="Dyer L.W."/>
            <person name="Earthrowl M.E."/>
            <person name="Faulkner L."/>
            <person name="Fleming C.J."/>
            <person name="Frankish A."/>
            <person name="Frankland J.A."/>
            <person name="French L."/>
            <person name="Fricker D.G."/>
            <person name="Garner P."/>
            <person name="Garnett J."/>
            <person name="Ghori J."/>
            <person name="Gilbert J.G.R."/>
            <person name="Glison C."/>
            <person name="Grafham D.V."/>
            <person name="Gribble S."/>
            <person name="Griffiths C."/>
            <person name="Griffiths-Jones S."/>
            <person name="Grocock R."/>
            <person name="Guy J."/>
            <person name="Hall R.E."/>
            <person name="Hammond S."/>
            <person name="Harley J.L."/>
            <person name="Harrison E.S.I."/>
            <person name="Hart E.A."/>
            <person name="Heath P.D."/>
            <person name="Henderson C.D."/>
            <person name="Hopkins B.L."/>
            <person name="Howard P.J."/>
            <person name="Howden P.J."/>
            <person name="Huckle E."/>
            <person name="Johnson C."/>
            <person name="Johnson D."/>
            <person name="Joy A.A."/>
            <person name="Kay M."/>
            <person name="Keenan S."/>
            <person name="Kershaw J.K."/>
            <person name="Kimberley A.M."/>
            <person name="King A."/>
            <person name="Knights A."/>
            <person name="Laird G.K."/>
            <person name="Langford C."/>
            <person name="Lawlor S."/>
            <person name="Leongamornlert D.A."/>
            <person name="Leversha M."/>
            <person name="Lloyd C."/>
            <person name="Lloyd D.M."/>
            <person name="Lovell J."/>
            <person name="Martin S."/>
            <person name="Mashreghi-Mohammadi M."/>
            <person name="Matthews L."/>
            <person name="McLaren S."/>
            <person name="McLay K.E."/>
            <person name="McMurray A."/>
            <person name="Milne S."/>
            <person name="Nickerson T."/>
            <person name="Nisbett J."/>
            <person name="Nordsiek G."/>
            <person name="Pearce A.V."/>
            <person name="Peck A.I."/>
            <person name="Porter K.M."/>
            <person name="Pandian R."/>
            <person name="Pelan S."/>
            <person name="Phillimore B."/>
            <person name="Povey S."/>
            <person name="Ramsey Y."/>
            <person name="Rand V."/>
            <person name="Scharfe M."/>
            <person name="Sehra H.K."/>
            <person name="Shownkeen R."/>
            <person name="Sims S.K."/>
            <person name="Skuce C.D."/>
            <person name="Smith M."/>
            <person name="Steward C.A."/>
            <person name="Swarbreck D."/>
            <person name="Sycamore N."/>
            <person name="Tester J."/>
            <person name="Thorpe A."/>
            <person name="Tracey A."/>
            <person name="Tromans A."/>
            <person name="Thomas D.W."/>
            <person name="Wall M."/>
            <person name="Wallis J.M."/>
            <person name="West A.P."/>
            <person name="Whitehead S.L."/>
            <person name="Willey D.L."/>
            <person name="Williams S.A."/>
            <person name="Wilming L."/>
            <person name="Wray P.W."/>
            <person name="Young L."/>
            <person name="Ashurst J.L."/>
            <person name="Coulson A."/>
            <person name="Blocker H."/>
            <person name="Durbin R.M."/>
            <person name="Sulston J.E."/>
            <person name="Hubbard T."/>
            <person name="Jackson M.J."/>
            <person name="Bentley D.R."/>
            <person name="Beck S."/>
            <person name="Rogers J."/>
            <person name="Dunham I."/>
        </authorList>
    </citation>
    <scope>NUCLEOTIDE SEQUENCE [LARGE SCALE GENOMIC DNA]</scope>
</reference>
<reference key="3">
    <citation type="journal article" date="2004" name="Genome Res.">
        <title>The status, quality, and expansion of the NIH full-length cDNA project: the Mammalian Gene Collection (MGC).</title>
        <authorList>
            <consortium name="The MGC Project Team"/>
        </authorList>
    </citation>
    <scope>NUCLEOTIDE SEQUENCE [LARGE SCALE MRNA] (ISOFORM 1)</scope>
    <scope>VARIANTS VAL-22 AND VAL-489</scope>
    <source>
        <tissue>Lung</tissue>
    </source>
</reference>
<reference key="4">
    <citation type="journal article" date="1996" name="J. Biol. Chem.">
        <title>Purification and properties of human cytosolic folylpoly-gamma-glutamate synthetase and organization, localization, and differential splicing of its gene.</title>
        <authorList>
            <person name="Chen L."/>
            <person name="Qi H."/>
            <person name="Korenberg J."/>
            <person name="Garrow T.A."/>
            <person name="Choi Y.J."/>
            <person name="Shane B."/>
        </authorList>
    </citation>
    <scope>NUCLEOTIDE SEQUENCE [GENOMIC DNA] OF 1-353</scope>
    <scope>FUNCTION</scope>
    <scope>CATALYTIC ACTIVITY</scope>
    <scope>COFACTOR</scope>
    <scope>ACTIVITY REGULATION</scope>
    <scope>BIOPHYSICOCHEMICAL PROPERTIES</scope>
    <scope>SUBSTRATE SPECIFICITY</scope>
    <scope>SUBCELLULAR LOCATION</scope>
    <scope>ALTERNATIVE SPLICING</scope>
    <source>
        <tissue>Fibroblast</tissue>
    </source>
</reference>
<reference key="5">
    <citation type="journal article" date="1995" name="J. Biol. Chem.">
        <title>Upstream organization of and multiple transcripts from the human folylpoly-gamma-glutamate synthetase gene.</title>
        <authorList>
            <person name="Freemantle S.J."/>
            <person name="Taylor S.M."/>
            <person name="Krystal G."/>
            <person name="Moran R.G."/>
        </authorList>
    </citation>
    <scope>NUCLEOTIDE SEQUENCE [GENOMIC DNA] OF 1-107</scope>
    <scope>ALTERNATIVE INITIATION</scope>
    <scope>VARIANT VAL-22</scope>
    <source>
        <tissue>Placenta</tissue>
    </source>
</reference>
<reference key="6">
    <citation type="journal article" date="1992" name="Proc. Natl. Acad. Sci. U.S.A.">
        <title>Expression cloning of a human cDNA encoding folylpoly(gamma-glutamate) synthetase and determination of its primary structure.</title>
        <authorList>
            <person name="Garrow T.A."/>
            <person name="Admon A."/>
            <person name="Shane B."/>
        </authorList>
    </citation>
    <scope>NUCLEOTIDE SEQUENCE [MRNA] OF 20-587 (ISOFORM 1)</scope>
    <scope>CATALYTIC ACTIVITY</scope>
    <source>
        <tissue>Lymphocyte</tissue>
    </source>
</reference>
<reference key="7">
    <citation type="journal article" date="1995" name="Cancer Res.">
        <title>Structural organization of the human folypoly-gamma-glutamate synthetase gene: evidence for a single genomic locus.</title>
        <authorList>
            <person name="Taylor S.M."/>
            <person name="Freemantle S.J."/>
            <person name="Moran R.G."/>
        </authorList>
    </citation>
    <scope>NUCLEOTIDE SEQUENCE [GENOMIC DNA] OF 102-587</scope>
    <source>
        <tissue>Placenta</tissue>
    </source>
</reference>
<reference key="8">
    <citation type="journal article" date="1993" name="J. Biol. Chem.">
        <title>Regulation of folate and one-carbon metabolism in mammalian cells. I. Folate metabolism in Chinese hamster ovary cells expressing Escherichia coli or human folylpoly-gamma-glutamate synthetase activity.</title>
        <authorList>
            <person name="Osborne C.B."/>
            <person name="Lowe K.E."/>
            <person name="Shane B."/>
        </authorList>
    </citation>
    <scope>FUNCTION</scope>
    <scope>CATALYTIC ACTIVITY</scope>
</reference>
<reference key="9">
    <citation type="journal article" date="1993" name="J. Biol. Chem.">
        <title>Regulation of folate and one-carbon metabolism in mammalian cells. II. Effect of folylpoly-gamma-glutamate synthetase substrate specificity and level on folate metabolism and folylpoly-gamma-glutamate specificity of metabolic cycles of one-carbon metabolism.</title>
        <authorList>
            <person name="Lowe K.E."/>
            <person name="Osborne C.B."/>
            <person name="Lin B.F."/>
            <person name="Kim J.S."/>
            <person name="Hsu J.C."/>
            <person name="Shane B."/>
        </authorList>
    </citation>
    <scope>FUNCTION</scope>
</reference>
<reference key="10">
    <citation type="journal article" date="1993" name="J. Biol. Chem.">
        <title>Regulation of folate and one-carbon metabolism in mammalian cells. III. Role of mitochondrial folylpoly-gamma-glutamate synthetase.</title>
        <authorList>
            <person name="Lin B.F."/>
            <person name="Huang R.F."/>
            <person name="Shane B."/>
        </authorList>
    </citation>
    <scope>CATALYTIC ACTIVITY</scope>
    <scope>SUBCELLULAR LOCATION</scope>
</reference>
<reference key="11">
    <citation type="journal article" date="1993" name="J. Biol. Chem.">
        <title>Regulation of folate and one-carbon metabolism in mammalian cells. IV. Role of folylpoly-gamma-glutamate synthetase in methotrexate metabolism and cytotoxicity.</title>
        <authorList>
            <person name="Kim J.S."/>
            <person name="Lowe K.E."/>
            <person name="Shane B."/>
        </authorList>
    </citation>
    <scope>FUNCTION</scope>
</reference>
<reference key="12">
    <citation type="journal article" date="2005" name="Biochim. Biophys. Acta">
        <title>Submitochondrial localization of the mitochondrial isoform of folylpolyglutamate synthetase in CCRF-CEM human T-lymphoblastic leukemia cells.</title>
        <authorList>
            <person name="Nair J.R."/>
            <person name="McGuire J.J."/>
        </authorList>
    </citation>
    <scope>SUBCELLULAR LOCATION</scope>
</reference>
<reference key="13">
    <citation type="journal article" date="2007" name="Cancer Res.">
        <title>Identification and characterization of genetic variation in the folylpolyglutamate synthase gene.</title>
        <authorList>
            <person name="Leil T.A."/>
            <person name="Endo C."/>
            <person name="Adjei A.A."/>
            <person name="Dy G.K."/>
            <person name="Salavaggione O.E."/>
            <person name="Reid J.R."/>
            <person name="Ames M.M."/>
            <person name="Adjei A.A."/>
        </authorList>
    </citation>
    <scope>CATALYTIC ACTIVITY</scope>
    <scope>BIOPHYSICOCHEMICAL PROPERTIES</scope>
    <scope>VARIANTS LEU-13; CYS-466; VAL-489 AND PHE-499</scope>
</reference>
<reference key="14">
    <citation type="journal article" date="2008" name="Biochemistry">
        <title>Concentration-dependent processivity of multiple glutamate ligations catalyzed by folylpoly-gamma-glutamate synthetase.</title>
        <authorList>
            <person name="Tomsho J.W."/>
            <person name="Moran R.G."/>
            <person name="Coward J.K."/>
        </authorList>
    </citation>
    <scope>CATALYTIC ACTIVITY</scope>
    <scope>REACTION MECHANISM</scope>
</reference>
<reference key="15">
    <citation type="journal article" date="2012" name="Proc. Natl. Acad. Sci. U.S.A.">
        <title>N-terminal acetylome analyses and functional insights of the N-terminal acetyltransferase NatB.</title>
        <authorList>
            <person name="Van Damme P."/>
            <person name="Lasa M."/>
            <person name="Polevoda B."/>
            <person name="Gazquez C."/>
            <person name="Elosegui-Artola A."/>
            <person name="Kim D.S."/>
            <person name="De Juan-Pardo E."/>
            <person name="Demeyer K."/>
            <person name="Hole K."/>
            <person name="Larrea E."/>
            <person name="Timmerman E."/>
            <person name="Prieto J."/>
            <person name="Arnesen T."/>
            <person name="Sherman F."/>
            <person name="Gevaert K."/>
            <person name="Aldabe R."/>
        </authorList>
    </citation>
    <scope>ACETYLATION [LARGE SCALE ANALYSIS] AT MET-43</scope>
    <scope>CLEAVAGE OF TRANSIT PEPTIDE [LARGE SCALE ANALYSIS] AFTER SER-42</scope>
    <scope>IDENTIFICATION BY MASS SPECTROMETRY [LARGE SCALE ANALYSIS]</scope>
</reference>
<reference key="16">
    <citation type="journal article" date="2013" name="J. Proteome Res.">
        <title>Toward a comprehensive characterization of a human cancer cell phosphoproteome.</title>
        <authorList>
            <person name="Zhou H."/>
            <person name="Di Palma S."/>
            <person name="Preisinger C."/>
            <person name="Peng M."/>
            <person name="Polat A.N."/>
            <person name="Heck A.J."/>
            <person name="Mohammed S."/>
        </authorList>
    </citation>
    <scope>PHOSPHORYLATION [LARGE SCALE ANALYSIS] AT SER-539</scope>
    <scope>IDENTIFICATION BY MASS SPECTROMETRY [LARGE SCALE ANALYSIS]</scope>
    <source>
        <tissue>Cervix carcinoma</tissue>
        <tissue>Erythroleukemia</tissue>
    </source>
</reference>
<dbReference type="EC" id="6.3.2.17"/>
<dbReference type="EMBL" id="AK056920">
    <property type="protein sequence ID" value="BAG51826.1"/>
    <property type="molecule type" value="mRNA"/>
</dbReference>
<dbReference type="EMBL" id="AK295309">
    <property type="protein sequence ID" value="BAH12029.1"/>
    <property type="molecule type" value="mRNA"/>
</dbReference>
<dbReference type="EMBL" id="AL162586">
    <property type="status" value="NOT_ANNOTATED_CDS"/>
    <property type="molecule type" value="Genomic_DNA"/>
</dbReference>
<dbReference type="EMBL" id="BC064393">
    <property type="protein sequence ID" value="AAH64393.1"/>
    <property type="molecule type" value="mRNA"/>
</dbReference>
<dbReference type="EMBL" id="AH006037">
    <property type="protein sequence ID" value="AAC13871.1"/>
    <property type="molecule type" value="Genomic_DNA"/>
</dbReference>
<dbReference type="EMBL" id="M98045">
    <property type="protein sequence ID" value="AAA35852.1"/>
    <property type="status" value="ALT_INIT"/>
    <property type="molecule type" value="mRNA"/>
</dbReference>
<dbReference type="EMBL" id="U14939">
    <property type="protein sequence ID" value="AAA85815.1"/>
    <property type="molecule type" value="Genomic_DNA"/>
</dbReference>
<dbReference type="EMBL" id="AH003340">
    <property type="protein sequence ID" value="AAA87568.1"/>
    <property type="molecule type" value="Genomic_DNA"/>
</dbReference>
<dbReference type="CCDS" id="CCDS35148.1">
    <molecule id="Q05932-1"/>
</dbReference>
<dbReference type="CCDS" id="CCDS35149.1">
    <molecule id="Q05932-3"/>
</dbReference>
<dbReference type="CCDS" id="CCDS75905.1">
    <molecule id="Q05932-4"/>
</dbReference>
<dbReference type="PIR" id="A46281">
    <property type="entry name" value="A46281"/>
</dbReference>
<dbReference type="RefSeq" id="NP_001018088.1">
    <molecule id="Q05932-3"/>
    <property type="nucleotide sequence ID" value="NM_001018078.2"/>
</dbReference>
<dbReference type="RefSeq" id="NP_001275732.1">
    <molecule id="Q05932-4"/>
    <property type="nucleotide sequence ID" value="NM_001288803.1"/>
</dbReference>
<dbReference type="RefSeq" id="NP_004948.4">
    <molecule id="Q05932-1"/>
    <property type="nucleotide sequence ID" value="NM_004957.5"/>
</dbReference>
<dbReference type="RefSeq" id="XP_047279082.1">
    <molecule id="Q05932-3"/>
    <property type="nucleotide sequence ID" value="XM_047423126.1"/>
</dbReference>
<dbReference type="RefSeq" id="XP_054218546.1">
    <molecule id="Q05932-3"/>
    <property type="nucleotide sequence ID" value="XM_054362571.1"/>
</dbReference>
<dbReference type="SMR" id="Q05932"/>
<dbReference type="BioGRID" id="108639">
    <property type="interactions" value="40"/>
</dbReference>
<dbReference type="FunCoup" id="Q05932">
    <property type="interactions" value="1676"/>
</dbReference>
<dbReference type="IntAct" id="Q05932">
    <property type="interactions" value="22"/>
</dbReference>
<dbReference type="STRING" id="9606.ENSP00000362344"/>
<dbReference type="BindingDB" id="Q05932"/>
<dbReference type="ChEMBL" id="CHEMBL3171"/>
<dbReference type="DrugBank" id="DB00142">
    <property type="generic name" value="Glutamic acid"/>
</dbReference>
<dbReference type="DrugBank" id="DB00563">
    <property type="generic name" value="Methotrexate"/>
</dbReference>
<dbReference type="DrugBank" id="DB06813">
    <property type="generic name" value="Pralatrexate"/>
</dbReference>
<dbReference type="DrugBank" id="DB00293">
    <property type="generic name" value="Raltitrexed"/>
</dbReference>
<dbReference type="DrugCentral" id="Q05932"/>
<dbReference type="GlyGen" id="Q05932">
    <property type="glycosylation" value="1 site, 1 N-linked glycan (1 site)"/>
</dbReference>
<dbReference type="iPTMnet" id="Q05932"/>
<dbReference type="PhosphoSitePlus" id="Q05932"/>
<dbReference type="SwissPalm" id="Q05932"/>
<dbReference type="BioMuta" id="FPGS"/>
<dbReference type="DMDM" id="1706884"/>
<dbReference type="jPOST" id="Q05932"/>
<dbReference type="MassIVE" id="Q05932"/>
<dbReference type="PaxDb" id="9606-ENSP00000362344"/>
<dbReference type="PeptideAtlas" id="Q05932"/>
<dbReference type="ProteomicsDB" id="58358">
    <molecule id="Q05932-1"/>
</dbReference>
<dbReference type="ProteomicsDB" id="58359">
    <molecule id="Q05932-2"/>
</dbReference>
<dbReference type="ProteomicsDB" id="58360">
    <molecule id="Q05932-3"/>
</dbReference>
<dbReference type="ProteomicsDB" id="58361">
    <molecule id="Q05932-4"/>
</dbReference>
<dbReference type="Pumba" id="Q05932"/>
<dbReference type="Antibodypedia" id="30819">
    <property type="antibodies" value="164 antibodies from 24 providers"/>
</dbReference>
<dbReference type="DNASU" id="2356"/>
<dbReference type="Ensembl" id="ENST00000373225.7">
    <molecule id="Q05932-3"/>
    <property type="protein sequence ID" value="ENSP00000362322.3"/>
    <property type="gene ID" value="ENSG00000136877.16"/>
</dbReference>
<dbReference type="Ensembl" id="ENST00000373247.7">
    <molecule id="Q05932-1"/>
    <property type="protein sequence ID" value="ENSP00000362344.2"/>
    <property type="gene ID" value="ENSG00000136877.16"/>
</dbReference>
<dbReference type="Ensembl" id="ENST00000393706.6">
    <molecule id="Q05932-4"/>
    <property type="protein sequence ID" value="ENSP00000377309.2"/>
    <property type="gene ID" value="ENSG00000136877.16"/>
</dbReference>
<dbReference type="GeneID" id="2356"/>
<dbReference type="KEGG" id="hsa:2356"/>
<dbReference type="MANE-Select" id="ENST00000373247.7">
    <property type="protein sequence ID" value="ENSP00000362344.2"/>
    <property type="RefSeq nucleotide sequence ID" value="NM_004957.6"/>
    <property type="RefSeq protein sequence ID" value="NP_004948.4"/>
</dbReference>
<dbReference type="UCSC" id="uc004bsg.3">
    <molecule id="Q05932-1"/>
    <property type="organism name" value="human"/>
</dbReference>
<dbReference type="AGR" id="HGNC:3824"/>
<dbReference type="CTD" id="2356"/>
<dbReference type="DisGeNET" id="2356"/>
<dbReference type="GeneCards" id="FPGS"/>
<dbReference type="HGNC" id="HGNC:3824">
    <property type="gene designation" value="FPGS"/>
</dbReference>
<dbReference type="HPA" id="ENSG00000136877">
    <property type="expression patterns" value="Low tissue specificity"/>
</dbReference>
<dbReference type="MIM" id="136510">
    <property type="type" value="gene+phenotype"/>
</dbReference>
<dbReference type="neXtProt" id="NX_Q05932"/>
<dbReference type="OpenTargets" id="ENSG00000136877"/>
<dbReference type="PharmGKB" id="PA167"/>
<dbReference type="VEuPathDB" id="HostDB:ENSG00000136877"/>
<dbReference type="eggNOG" id="KOG2525">
    <property type="taxonomic scope" value="Eukaryota"/>
</dbReference>
<dbReference type="GeneTree" id="ENSGT00390000016526"/>
<dbReference type="HOGENOM" id="CLU_015869_0_2_1"/>
<dbReference type="InParanoid" id="Q05932"/>
<dbReference type="OMA" id="ESLDCCM"/>
<dbReference type="OrthoDB" id="5212574at2759"/>
<dbReference type="PAN-GO" id="Q05932">
    <property type="GO annotations" value="5 GO annotations based on evolutionary models"/>
</dbReference>
<dbReference type="PhylomeDB" id="Q05932"/>
<dbReference type="TreeFam" id="TF313956"/>
<dbReference type="BioCyc" id="MetaCyc:HS06237-MONOMER"/>
<dbReference type="BRENDA" id="6.3.2.17">
    <property type="organism ID" value="2681"/>
</dbReference>
<dbReference type="PathwayCommons" id="Q05932"/>
<dbReference type="Reactome" id="R-HSA-196757">
    <property type="pathway name" value="Metabolism of folate and pterines"/>
</dbReference>
<dbReference type="SignaLink" id="Q05932"/>
<dbReference type="UniPathway" id="UPA00850"/>
<dbReference type="BioGRID-ORCS" id="2356">
    <property type="hits" value="275 hits in 1165 CRISPR screens"/>
</dbReference>
<dbReference type="ChiTaRS" id="FPGS">
    <property type="organism name" value="human"/>
</dbReference>
<dbReference type="GeneWiki" id="FPGS"/>
<dbReference type="GenomeRNAi" id="2356"/>
<dbReference type="Pharos" id="Q05932">
    <property type="development level" value="Tchem"/>
</dbReference>
<dbReference type="PRO" id="PR:Q05932"/>
<dbReference type="Proteomes" id="UP000005640">
    <property type="component" value="Chromosome 9"/>
</dbReference>
<dbReference type="RNAct" id="Q05932">
    <property type="molecule type" value="protein"/>
</dbReference>
<dbReference type="Bgee" id="ENSG00000136877">
    <property type="expression patterns" value="Expressed in left ovary and 148 other cell types or tissues"/>
</dbReference>
<dbReference type="ExpressionAtlas" id="Q05932">
    <property type="expression patterns" value="baseline and differential"/>
</dbReference>
<dbReference type="GO" id="GO:0005737">
    <property type="term" value="C:cytoplasm"/>
    <property type="evidence" value="ECO:0000318"/>
    <property type="project" value="GO_Central"/>
</dbReference>
<dbReference type="GO" id="GO:0005829">
    <property type="term" value="C:cytosol"/>
    <property type="evidence" value="ECO:0000314"/>
    <property type="project" value="BHF-UCL"/>
</dbReference>
<dbReference type="GO" id="GO:0005743">
    <property type="term" value="C:mitochondrial inner membrane"/>
    <property type="evidence" value="ECO:0007669"/>
    <property type="project" value="UniProtKB-SubCell"/>
</dbReference>
<dbReference type="GO" id="GO:0005759">
    <property type="term" value="C:mitochondrial matrix"/>
    <property type="evidence" value="ECO:0000314"/>
    <property type="project" value="FlyBase"/>
</dbReference>
<dbReference type="GO" id="GO:0005739">
    <property type="term" value="C:mitochondrion"/>
    <property type="evidence" value="ECO:0006056"/>
    <property type="project" value="FlyBase"/>
</dbReference>
<dbReference type="GO" id="GO:0005524">
    <property type="term" value="F:ATP binding"/>
    <property type="evidence" value="ECO:0007669"/>
    <property type="project" value="UniProtKB-KW"/>
</dbReference>
<dbReference type="GO" id="GO:0046872">
    <property type="term" value="F:metal ion binding"/>
    <property type="evidence" value="ECO:0007669"/>
    <property type="project" value="UniProtKB-KW"/>
</dbReference>
<dbReference type="GO" id="GO:0004326">
    <property type="term" value="F:tetrahydrofolylpolyglutamate synthase activity"/>
    <property type="evidence" value="ECO:0000314"/>
    <property type="project" value="BHF-UCL"/>
</dbReference>
<dbReference type="GO" id="GO:0008283">
    <property type="term" value="P:cell population proliferation"/>
    <property type="evidence" value="ECO:0000315"/>
    <property type="project" value="BHF-UCL"/>
</dbReference>
<dbReference type="GO" id="GO:0046655">
    <property type="term" value="P:folic acid metabolic process"/>
    <property type="evidence" value="ECO:0000304"/>
    <property type="project" value="Reactome"/>
</dbReference>
<dbReference type="GO" id="GO:0006760">
    <property type="term" value="P:folic acid-containing compound metabolic process"/>
    <property type="evidence" value="ECO:0000314"/>
    <property type="project" value="BHF-UCL"/>
</dbReference>
<dbReference type="GO" id="GO:0006536">
    <property type="term" value="P:glutamate metabolic process"/>
    <property type="evidence" value="ECO:0000314"/>
    <property type="project" value="BHF-UCL"/>
</dbReference>
<dbReference type="GO" id="GO:0006139">
    <property type="term" value="P:nucleobase-containing compound metabolic process"/>
    <property type="evidence" value="ECO:0000304"/>
    <property type="project" value="ProtInc"/>
</dbReference>
<dbReference type="GO" id="GO:0006730">
    <property type="term" value="P:one-carbon metabolic process"/>
    <property type="evidence" value="ECO:0007669"/>
    <property type="project" value="UniProtKB-KW"/>
</dbReference>
<dbReference type="GO" id="GO:0046901">
    <property type="term" value="P:tetrahydrofolylpolyglutamate biosynthetic process"/>
    <property type="evidence" value="ECO:0000314"/>
    <property type="project" value="BHF-UCL"/>
</dbReference>
<dbReference type="FunFam" id="3.40.1190.10:FF:000005">
    <property type="entry name" value="Folylpolyglutamate synthase"/>
    <property type="match status" value="1"/>
</dbReference>
<dbReference type="FunFam" id="3.90.190.20:FF:000007">
    <property type="entry name" value="Folylpolyglutamate synthase"/>
    <property type="match status" value="1"/>
</dbReference>
<dbReference type="Gene3D" id="3.90.190.20">
    <property type="entry name" value="Mur ligase, C-terminal domain"/>
    <property type="match status" value="1"/>
</dbReference>
<dbReference type="Gene3D" id="3.40.1190.10">
    <property type="entry name" value="Mur-like, catalytic domain"/>
    <property type="match status" value="1"/>
</dbReference>
<dbReference type="InterPro" id="IPR001645">
    <property type="entry name" value="Folylpolyglutamate_synth"/>
</dbReference>
<dbReference type="InterPro" id="IPR018109">
    <property type="entry name" value="Folylpolyglutamate_synth_CS"/>
</dbReference>
<dbReference type="InterPro" id="IPR023600">
    <property type="entry name" value="Folylpolyglutamate_synth_euk"/>
</dbReference>
<dbReference type="InterPro" id="IPR036565">
    <property type="entry name" value="Mur-like_cat_sf"/>
</dbReference>
<dbReference type="InterPro" id="IPR036615">
    <property type="entry name" value="Mur_ligase_C_dom_sf"/>
</dbReference>
<dbReference type="NCBIfam" id="TIGR01499">
    <property type="entry name" value="folC"/>
    <property type="match status" value="1"/>
</dbReference>
<dbReference type="PANTHER" id="PTHR11136:SF5">
    <property type="entry name" value="FOLYLPOLYGLUTAMATE SYNTHASE, MITOCHONDRIAL"/>
    <property type="match status" value="1"/>
</dbReference>
<dbReference type="PANTHER" id="PTHR11136">
    <property type="entry name" value="FOLYLPOLYGLUTAMATE SYNTHASE-RELATED"/>
    <property type="match status" value="1"/>
</dbReference>
<dbReference type="PIRSF" id="PIRSF038895">
    <property type="entry name" value="FPGS"/>
    <property type="match status" value="1"/>
</dbReference>
<dbReference type="SUPFAM" id="SSF53623">
    <property type="entry name" value="MurD-like peptide ligases, catalytic domain"/>
    <property type="match status" value="1"/>
</dbReference>
<dbReference type="SUPFAM" id="SSF53244">
    <property type="entry name" value="MurD-like peptide ligases, peptide-binding domain"/>
    <property type="match status" value="1"/>
</dbReference>
<dbReference type="PROSITE" id="PS01011">
    <property type="entry name" value="FOLYLPOLYGLU_SYNT_1"/>
    <property type="match status" value="1"/>
</dbReference>
<dbReference type="PROSITE" id="PS01012">
    <property type="entry name" value="FOLYLPOLYGLU_SYNT_2"/>
    <property type="match status" value="1"/>
</dbReference>